<sequence length="150" mass="16491">MDIAGRSLVYFSSVSENTHRFVQKLGIPATRIPLHGRIEVDEPYVLILPTYGGGRANPGLDAGGYVPKQVIAFLNNDHNRAQLRGVIAAGNTNFGAEFCYAGDVVSRKCSVPYLYRFELMGTEDDVAAVRTGLAEFWKEQTCHQPSLQSL</sequence>
<name>NRDI_MYCBP</name>
<reference key="1">
    <citation type="journal article" date="2007" name="Proc. Natl. Acad. Sci. U.S.A.">
        <title>Genome plasticity of BCG and impact on vaccine efficacy.</title>
        <authorList>
            <person name="Brosch R."/>
            <person name="Gordon S.V."/>
            <person name="Garnier T."/>
            <person name="Eiglmeier K."/>
            <person name="Frigui W."/>
            <person name="Valenti P."/>
            <person name="Dos Santos S."/>
            <person name="Duthoy S."/>
            <person name="Lacroix C."/>
            <person name="Garcia-Pelayo C."/>
            <person name="Inwald J.K."/>
            <person name="Golby P."/>
            <person name="Garcia J.N."/>
            <person name="Hewinson R.G."/>
            <person name="Behr M.A."/>
            <person name="Quail M.A."/>
            <person name="Churcher C."/>
            <person name="Barrell B.G."/>
            <person name="Parkhill J."/>
            <person name="Cole S.T."/>
        </authorList>
    </citation>
    <scope>NUCLEOTIDE SEQUENCE [LARGE SCALE GENOMIC DNA]</scope>
    <source>
        <strain>BCG / Pasteur 1173P2</strain>
    </source>
</reference>
<proteinExistence type="inferred from homology"/>
<evidence type="ECO:0000255" key="1">
    <source>
        <dbReference type="HAMAP-Rule" id="MF_00128"/>
    </source>
</evidence>
<dbReference type="EMBL" id="AM408590">
    <property type="protein sequence ID" value="CAL73065.1"/>
    <property type="molecule type" value="Genomic_DNA"/>
</dbReference>
<dbReference type="RefSeq" id="WP_003415981.1">
    <property type="nucleotide sequence ID" value="NC_008769.1"/>
</dbReference>
<dbReference type="SMR" id="A1KN49"/>
<dbReference type="GeneID" id="45427045"/>
<dbReference type="KEGG" id="mbb:BCG_3076c"/>
<dbReference type="HOGENOM" id="CLU_114845_0_0_11"/>
<dbReference type="Proteomes" id="UP000001472">
    <property type="component" value="Chromosome"/>
</dbReference>
<dbReference type="GO" id="GO:0010181">
    <property type="term" value="F:FMN binding"/>
    <property type="evidence" value="ECO:0007669"/>
    <property type="project" value="InterPro"/>
</dbReference>
<dbReference type="GO" id="GO:0036211">
    <property type="term" value="P:protein modification process"/>
    <property type="evidence" value="ECO:0007669"/>
    <property type="project" value="InterPro"/>
</dbReference>
<dbReference type="FunFam" id="3.40.50.360:FF:000005">
    <property type="entry name" value="Protein NrdI"/>
    <property type="match status" value="1"/>
</dbReference>
<dbReference type="Gene3D" id="3.40.50.360">
    <property type="match status" value="1"/>
</dbReference>
<dbReference type="HAMAP" id="MF_00128">
    <property type="entry name" value="NrdI"/>
    <property type="match status" value="1"/>
</dbReference>
<dbReference type="InterPro" id="IPR029039">
    <property type="entry name" value="Flavoprotein-like_sf"/>
</dbReference>
<dbReference type="InterPro" id="IPR020852">
    <property type="entry name" value="RNR_Ib_NrdI_bac"/>
</dbReference>
<dbReference type="InterPro" id="IPR004465">
    <property type="entry name" value="RNR_NrdI"/>
</dbReference>
<dbReference type="NCBIfam" id="TIGR00333">
    <property type="entry name" value="nrdI"/>
    <property type="match status" value="1"/>
</dbReference>
<dbReference type="PANTHER" id="PTHR37297">
    <property type="entry name" value="PROTEIN NRDI"/>
    <property type="match status" value="1"/>
</dbReference>
<dbReference type="PANTHER" id="PTHR37297:SF1">
    <property type="entry name" value="PROTEIN NRDI"/>
    <property type="match status" value="1"/>
</dbReference>
<dbReference type="Pfam" id="PF07972">
    <property type="entry name" value="Flavodoxin_NdrI"/>
    <property type="match status" value="1"/>
</dbReference>
<dbReference type="PIRSF" id="PIRSF005087">
    <property type="entry name" value="NrdI"/>
    <property type="match status" value="1"/>
</dbReference>
<dbReference type="SUPFAM" id="SSF52218">
    <property type="entry name" value="Flavoproteins"/>
    <property type="match status" value="1"/>
</dbReference>
<organism>
    <name type="scientific">Mycobacterium bovis (strain BCG / Pasteur 1173P2)</name>
    <dbReference type="NCBI Taxonomy" id="410289"/>
    <lineage>
        <taxon>Bacteria</taxon>
        <taxon>Bacillati</taxon>
        <taxon>Actinomycetota</taxon>
        <taxon>Actinomycetes</taxon>
        <taxon>Mycobacteriales</taxon>
        <taxon>Mycobacteriaceae</taxon>
        <taxon>Mycobacterium</taxon>
        <taxon>Mycobacterium tuberculosis complex</taxon>
    </lineage>
</organism>
<accession>A1KN49</accession>
<feature type="chain" id="PRO_1000016507" description="Protein NrdI">
    <location>
        <begin position="1"/>
        <end position="150"/>
    </location>
</feature>
<protein>
    <recommendedName>
        <fullName evidence="1">Protein NrdI</fullName>
    </recommendedName>
</protein>
<comment type="function">
    <text evidence="1">Probably involved in ribonucleotide reductase function.</text>
</comment>
<comment type="similarity">
    <text evidence="1">Belongs to the NrdI family.</text>
</comment>
<gene>
    <name evidence="1" type="primary">nrdI</name>
    <name type="ordered locus">BCG_3076c</name>
</gene>